<sequence length="196" mass="22298">MKVAVIKYNAGNIRSVDYALKRLGVEAVITSDKEVLKAADKVIFPGVGEAETTMLHLKESGMDRFIKELRQPVLGICLGMQLMCRFSEEGNVDCLGIFDTDVKRFAPRKHEEKVPHMGWNTISCLKSDLFKGFTRDEFVYFVHSYYVPVSEFTAAETDYIRPFSAALHKDNFYATQFHPEKSGEAGERIIKNFLEL</sequence>
<gene>
    <name evidence="1" type="primary">hisH</name>
    <name type="ordered locus">BF3055</name>
</gene>
<protein>
    <recommendedName>
        <fullName evidence="1">Imidazole glycerol phosphate synthase subunit HisH</fullName>
        <ecNumber evidence="1">4.3.2.10</ecNumber>
    </recommendedName>
    <alternativeName>
        <fullName evidence="1">IGP synthase glutaminase subunit</fullName>
        <ecNumber evidence="1">3.5.1.2</ecNumber>
    </alternativeName>
    <alternativeName>
        <fullName evidence="1">IGP synthase subunit HisH</fullName>
    </alternativeName>
    <alternativeName>
        <fullName evidence="1">ImGP synthase subunit HisH</fullName>
        <shortName evidence="1">IGPS subunit HisH</shortName>
    </alternativeName>
</protein>
<accession>Q64RT0</accession>
<dbReference type="EC" id="4.3.2.10" evidence="1"/>
<dbReference type="EC" id="3.5.1.2" evidence="1"/>
<dbReference type="EMBL" id="AP006841">
    <property type="protein sequence ID" value="BAD49801.1"/>
    <property type="molecule type" value="Genomic_DNA"/>
</dbReference>
<dbReference type="RefSeq" id="WP_005803062.1">
    <property type="nucleotide sequence ID" value="NC_006347.1"/>
</dbReference>
<dbReference type="RefSeq" id="YP_100335.1">
    <property type="nucleotide sequence ID" value="NC_006347.1"/>
</dbReference>
<dbReference type="SMR" id="Q64RT0"/>
<dbReference type="STRING" id="295405.BF3055"/>
<dbReference type="KEGG" id="bfr:BF3055"/>
<dbReference type="HOGENOM" id="CLU_071837_0_0_10"/>
<dbReference type="OrthoDB" id="9807137at2"/>
<dbReference type="UniPathway" id="UPA00031">
    <property type="reaction ID" value="UER00010"/>
</dbReference>
<dbReference type="Proteomes" id="UP000002197">
    <property type="component" value="Chromosome"/>
</dbReference>
<dbReference type="GO" id="GO:0005737">
    <property type="term" value="C:cytoplasm"/>
    <property type="evidence" value="ECO:0007669"/>
    <property type="project" value="UniProtKB-SubCell"/>
</dbReference>
<dbReference type="GO" id="GO:0004359">
    <property type="term" value="F:glutaminase activity"/>
    <property type="evidence" value="ECO:0007669"/>
    <property type="project" value="UniProtKB-EC"/>
</dbReference>
<dbReference type="GO" id="GO:0000107">
    <property type="term" value="F:imidazoleglycerol-phosphate synthase activity"/>
    <property type="evidence" value="ECO:0007669"/>
    <property type="project" value="UniProtKB-UniRule"/>
</dbReference>
<dbReference type="GO" id="GO:0016829">
    <property type="term" value="F:lyase activity"/>
    <property type="evidence" value="ECO:0007669"/>
    <property type="project" value="UniProtKB-KW"/>
</dbReference>
<dbReference type="GO" id="GO:0000105">
    <property type="term" value="P:L-histidine biosynthetic process"/>
    <property type="evidence" value="ECO:0007669"/>
    <property type="project" value="UniProtKB-UniRule"/>
</dbReference>
<dbReference type="CDD" id="cd01748">
    <property type="entry name" value="GATase1_IGP_Synthase"/>
    <property type="match status" value="1"/>
</dbReference>
<dbReference type="FunFam" id="3.40.50.880:FF:000009">
    <property type="entry name" value="Imidazole glycerol phosphate synthase subunit HisH"/>
    <property type="match status" value="1"/>
</dbReference>
<dbReference type="Gene3D" id="3.40.50.880">
    <property type="match status" value="1"/>
</dbReference>
<dbReference type="HAMAP" id="MF_00278">
    <property type="entry name" value="HisH"/>
    <property type="match status" value="1"/>
</dbReference>
<dbReference type="InterPro" id="IPR029062">
    <property type="entry name" value="Class_I_gatase-like"/>
</dbReference>
<dbReference type="InterPro" id="IPR017926">
    <property type="entry name" value="GATASE"/>
</dbReference>
<dbReference type="InterPro" id="IPR010139">
    <property type="entry name" value="Imidazole-glycPsynth_HisH"/>
</dbReference>
<dbReference type="NCBIfam" id="TIGR01855">
    <property type="entry name" value="IMP_synth_hisH"/>
    <property type="match status" value="1"/>
</dbReference>
<dbReference type="PANTHER" id="PTHR42701">
    <property type="entry name" value="IMIDAZOLE GLYCEROL PHOSPHATE SYNTHASE SUBUNIT HISH"/>
    <property type="match status" value="1"/>
</dbReference>
<dbReference type="PANTHER" id="PTHR42701:SF1">
    <property type="entry name" value="IMIDAZOLE GLYCEROL PHOSPHATE SYNTHASE SUBUNIT HISH"/>
    <property type="match status" value="1"/>
</dbReference>
<dbReference type="Pfam" id="PF00117">
    <property type="entry name" value="GATase"/>
    <property type="match status" value="1"/>
</dbReference>
<dbReference type="PIRSF" id="PIRSF000495">
    <property type="entry name" value="Amidotransf_hisH"/>
    <property type="match status" value="1"/>
</dbReference>
<dbReference type="SUPFAM" id="SSF52317">
    <property type="entry name" value="Class I glutamine amidotransferase-like"/>
    <property type="match status" value="1"/>
</dbReference>
<dbReference type="PROSITE" id="PS51273">
    <property type="entry name" value="GATASE_TYPE_1"/>
    <property type="match status" value="1"/>
</dbReference>
<organism>
    <name type="scientific">Bacteroides fragilis (strain YCH46)</name>
    <dbReference type="NCBI Taxonomy" id="295405"/>
    <lineage>
        <taxon>Bacteria</taxon>
        <taxon>Pseudomonadati</taxon>
        <taxon>Bacteroidota</taxon>
        <taxon>Bacteroidia</taxon>
        <taxon>Bacteroidales</taxon>
        <taxon>Bacteroidaceae</taxon>
        <taxon>Bacteroides</taxon>
    </lineage>
</organism>
<keyword id="KW-0028">Amino-acid biosynthesis</keyword>
<keyword id="KW-0963">Cytoplasm</keyword>
<keyword id="KW-0315">Glutamine amidotransferase</keyword>
<keyword id="KW-0368">Histidine biosynthesis</keyword>
<keyword id="KW-0378">Hydrolase</keyword>
<keyword id="KW-0456">Lyase</keyword>
<name>HIS5_BACFR</name>
<feature type="chain" id="PRO_0000231704" description="Imidazole glycerol phosphate synthase subunit HisH">
    <location>
        <begin position="1"/>
        <end position="196"/>
    </location>
</feature>
<feature type="domain" description="Glutamine amidotransferase type-1" evidence="1">
    <location>
        <begin position="2"/>
        <end position="196"/>
    </location>
</feature>
<feature type="active site" description="Nucleophile" evidence="1">
    <location>
        <position position="77"/>
    </location>
</feature>
<feature type="active site" evidence="1">
    <location>
        <position position="178"/>
    </location>
</feature>
<feature type="active site" evidence="1">
    <location>
        <position position="180"/>
    </location>
</feature>
<comment type="function">
    <text evidence="1">IGPS catalyzes the conversion of PRFAR and glutamine to IGP, AICAR and glutamate. The HisH subunit catalyzes the hydrolysis of glutamine to glutamate and ammonia as part of the synthesis of IGP and AICAR. The resulting ammonia molecule is channeled to the active site of HisF.</text>
</comment>
<comment type="catalytic activity">
    <reaction evidence="1">
        <text>5-[(5-phospho-1-deoxy-D-ribulos-1-ylimino)methylamino]-1-(5-phospho-beta-D-ribosyl)imidazole-4-carboxamide + L-glutamine = D-erythro-1-(imidazol-4-yl)glycerol 3-phosphate + 5-amino-1-(5-phospho-beta-D-ribosyl)imidazole-4-carboxamide + L-glutamate + H(+)</text>
        <dbReference type="Rhea" id="RHEA:24793"/>
        <dbReference type="ChEBI" id="CHEBI:15378"/>
        <dbReference type="ChEBI" id="CHEBI:29985"/>
        <dbReference type="ChEBI" id="CHEBI:58278"/>
        <dbReference type="ChEBI" id="CHEBI:58359"/>
        <dbReference type="ChEBI" id="CHEBI:58475"/>
        <dbReference type="ChEBI" id="CHEBI:58525"/>
        <dbReference type="EC" id="4.3.2.10"/>
    </reaction>
</comment>
<comment type="catalytic activity">
    <reaction evidence="1">
        <text>L-glutamine + H2O = L-glutamate + NH4(+)</text>
        <dbReference type="Rhea" id="RHEA:15889"/>
        <dbReference type="ChEBI" id="CHEBI:15377"/>
        <dbReference type="ChEBI" id="CHEBI:28938"/>
        <dbReference type="ChEBI" id="CHEBI:29985"/>
        <dbReference type="ChEBI" id="CHEBI:58359"/>
        <dbReference type="EC" id="3.5.1.2"/>
    </reaction>
</comment>
<comment type="pathway">
    <text evidence="1">Amino-acid biosynthesis; L-histidine biosynthesis; L-histidine from 5-phospho-alpha-D-ribose 1-diphosphate: step 5/9.</text>
</comment>
<comment type="subunit">
    <text evidence="1">Heterodimer of HisH and HisF.</text>
</comment>
<comment type="subcellular location">
    <subcellularLocation>
        <location evidence="1">Cytoplasm</location>
    </subcellularLocation>
</comment>
<proteinExistence type="inferred from homology"/>
<evidence type="ECO:0000255" key="1">
    <source>
        <dbReference type="HAMAP-Rule" id="MF_00278"/>
    </source>
</evidence>
<reference key="1">
    <citation type="journal article" date="2004" name="Proc. Natl. Acad. Sci. U.S.A.">
        <title>Genomic analysis of Bacteroides fragilis reveals extensive DNA inversions regulating cell surface adaptation.</title>
        <authorList>
            <person name="Kuwahara T."/>
            <person name="Yamashita A."/>
            <person name="Hirakawa H."/>
            <person name="Nakayama H."/>
            <person name="Toh H."/>
            <person name="Okada N."/>
            <person name="Kuhara S."/>
            <person name="Hattori M."/>
            <person name="Hayashi T."/>
            <person name="Ohnishi Y."/>
        </authorList>
    </citation>
    <scope>NUCLEOTIDE SEQUENCE [LARGE SCALE GENOMIC DNA]</scope>
    <source>
        <strain>YCH46</strain>
    </source>
</reference>